<reference key="1">
    <citation type="journal article" date="1985" name="Proc. Natl. Acad. Sci. U.S.A.">
        <title>Cloning and expression of the 1.3S biotin-containing subunit of transcarboxylase.</title>
        <authorList>
            <person name="Murtif V.L."/>
            <person name="Bahler C.R."/>
            <person name="Samols D."/>
        </authorList>
    </citation>
    <scope>NUCLEOTIDE SEQUENCE [GENOMIC DNA]</scope>
</reference>
<reference key="2">
    <citation type="journal article" date="1979" name="J. Biol. Chem.">
        <title>Amino acid sequence of the biotinyl subunit from transcarboxylase.</title>
        <authorList>
            <person name="Maloy W.L."/>
            <person name="Bowien B.U."/>
            <person name="Zwolinski G.K."/>
            <person name="Kumar G.K."/>
            <person name="Wood H.G."/>
            <person name="Ericsson L.H."/>
            <person name="Walsh K.A."/>
        </authorList>
    </citation>
    <scope>PROTEIN SEQUENCE</scope>
    <scope>BIOTINYLATION AT LYS-89</scope>
</reference>
<reference key="3">
    <citation type="journal article" date="1992" name="J. Biol. Chem.">
        <title>The importance of methionine residues for the catalysis of the biotin enzyme, transcarboxylase. Analysis by site-directed mutagenesis.</title>
        <authorList>
            <person name="Shenoy B.C."/>
            <person name="Xie Y."/>
            <person name="Park V.L."/>
            <person name="Kumar G.K."/>
            <person name="Beegen H."/>
            <person name="Wood H.G."/>
            <person name="Samols D."/>
        </authorList>
    </citation>
    <scope>MUTAGENESIS OF ALA-87; MET-88 AND MET-90</scope>
    <scope>SUBUNIT STRUCTURE</scope>
</reference>
<reference key="4">
    <citation type="journal article" date="1997" name="Biochemistry">
        <title>Absence of observable biotin-protein interactions in the 1.3S subunit of transcarboxylase: an NMR study.</title>
        <authorList>
            <person name="Reddy D.V."/>
            <person name="Shenoy B.C."/>
            <person name="Carey P.R."/>
            <person name="Soennichsen F.D."/>
        </authorList>
    </citation>
    <scope>STRUCTURE BY NMR</scope>
</reference>
<reference key="5">
    <citation type="journal article" date="2000" name="Biochemistry">
        <title>High resolution solution structure of the 1.3S subunit of transcarboxylase from Propionibacterium shermanii.</title>
        <authorList>
            <person name="Reddy D.V."/>
            <person name="Shenoy B.C."/>
            <person name="Carey P.R."/>
            <person name="Soennichsen F.D."/>
        </authorList>
    </citation>
    <scope>STRUCTURE BY NMR</scope>
</reference>
<feature type="chain" id="PRO_0000146809" description="Methylmalonyl-CoA carboxyltransferase 1.3S subunit">
    <location>
        <begin position="1"/>
        <end position="123"/>
    </location>
</feature>
<feature type="domain" description="Biotinyl-binding" evidence="1">
    <location>
        <begin position="46"/>
        <end position="123"/>
    </location>
</feature>
<feature type="modified residue" description="N6-biotinyllysine" evidence="1 3">
    <location>
        <position position="89"/>
    </location>
</feature>
<feature type="mutagenesis site" description="Reduces activity 10-fold; when associated with L-88." evidence="2">
    <original>A</original>
    <variation>M</variation>
    <location>
        <position position="87"/>
    </location>
</feature>
<feature type="mutagenesis site" description="Reduces activity at least 10-fold." evidence="2">
    <original>M</original>
    <variation>A</variation>
    <variation>C</variation>
    <variation>T</variation>
    <variation>L</variation>
    <location>
        <position position="88"/>
    </location>
</feature>
<feature type="mutagenesis site" description="No effect." evidence="2">
    <original>M</original>
    <variation>L</variation>
    <location>
        <position position="90"/>
    </location>
</feature>
<feature type="strand" evidence="4">
    <location>
        <begin position="54"/>
        <end position="62"/>
    </location>
</feature>
<feature type="strand" evidence="4">
    <location>
        <begin position="64"/>
        <end position="68"/>
    </location>
</feature>
<feature type="strand" evidence="4">
    <location>
        <begin position="80"/>
        <end position="87"/>
    </location>
</feature>
<feature type="strand" evidence="4">
    <location>
        <begin position="90"/>
        <end position="95"/>
    </location>
</feature>
<feature type="strand" evidence="4">
    <location>
        <begin position="97"/>
        <end position="105"/>
    </location>
</feature>
<feature type="strand" evidence="4">
    <location>
        <begin position="117"/>
        <end position="122"/>
    </location>
</feature>
<sequence length="123" mass="12367">MKLKVTVNGTAYDVDVDVDKSHENPMGTILFGGGTGGAPAPRAAGGAGAGKAGEGEIPAPLAGTVSKILVKEGDTVKAGQTVLVLEAMKMETEINAPTDGKVEKVLVKERDAVQGGQGLIKIG</sequence>
<comment type="function">
    <text>The biotinyl 1.3S subunit serves as a carboxyl carrier between the substrate-binding sites on the 12S and 5S subunits.</text>
</comment>
<comment type="catalytic activity">
    <reaction>
        <text>(S)-methylmalonyl-CoA + pyruvate = propanoyl-CoA + oxaloacetate</text>
        <dbReference type="Rhea" id="RHEA:20764"/>
        <dbReference type="ChEBI" id="CHEBI:15361"/>
        <dbReference type="ChEBI" id="CHEBI:16452"/>
        <dbReference type="ChEBI" id="CHEBI:57327"/>
        <dbReference type="ChEBI" id="CHEBI:57392"/>
        <dbReference type="EC" id="2.1.3.1"/>
    </reaction>
</comment>
<comment type="subunit">
    <text evidence="2">Transcarboxylase is composed of three subunits: 1.3S, 5S, and 12S. The core of the enzyme is composed of six 12S subunits. On each side of the core there are three pairs of 5S subunits. Each 5S dimer is attached to the core by two 1.3S subunits. Thus the total number of chains is 30 (6 + 12 + 12).</text>
</comment>
<proteinExistence type="evidence at protein level"/>
<organism>
    <name type="scientific">Propionibacterium freudenreichii subsp. shermanii</name>
    <dbReference type="NCBI Taxonomy" id="1752"/>
    <lineage>
        <taxon>Bacteria</taxon>
        <taxon>Bacillati</taxon>
        <taxon>Actinomycetota</taxon>
        <taxon>Actinomycetes</taxon>
        <taxon>Propionibacteriales</taxon>
        <taxon>Propionibacteriaceae</taxon>
        <taxon>Propionibacterium</taxon>
    </lineage>
</organism>
<accession>P02904</accession>
<dbReference type="EC" id="2.1.3.1"/>
<dbReference type="EMBL" id="M11738">
    <property type="protein sequence ID" value="AAA25674.1"/>
    <property type="molecule type" value="Genomic_DNA"/>
</dbReference>
<dbReference type="PIR" id="A03401">
    <property type="entry name" value="BKIP"/>
</dbReference>
<dbReference type="RefSeq" id="WP_013161729.1">
    <property type="nucleotide sequence ID" value="NZ_OVTV01000165.1"/>
</dbReference>
<dbReference type="PDB" id="1DCZ">
    <property type="method" value="NMR"/>
    <property type="chains" value="A=47-123"/>
</dbReference>
<dbReference type="PDB" id="1DD2">
    <property type="method" value="NMR"/>
    <property type="chains" value="A=47-123"/>
</dbReference>
<dbReference type="PDB" id="1O78">
    <property type="method" value="NMR"/>
    <property type="chains" value="A=1-9, A=51-123"/>
</dbReference>
<dbReference type="PDBsum" id="1DCZ"/>
<dbReference type="PDBsum" id="1DD2"/>
<dbReference type="PDBsum" id="1O78"/>
<dbReference type="BMRB" id="P02904"/>
<dbReference type="SMR" id="P02904"/>
<dbReference type="OMA" id="PRPKIGH"/>
<dbReference type="BioCyc" id="MetaCyc:MONOMER-12431"/>
<dbReference type="EvolutionaryTrace" id="P02904"/>
<dbReference type="GO" id="GO:0047154">
    <property type="term" value="F:methylmalonyl-CoA carboxytransferase activity"/>
    <property type="evidence" value="ECO:0007669"/>
    <property type="project" value="UniProtKB-EC"/>
</dbReference>
<dbReference type="CDD" id="cd06850">
    <property type="entry name" value="biotinyl_domain"/>
    <property type="match status" value="1"/>
</dbReference>
<dbReference type="FunFam" id="2.40.50.100:FF:000003">
    <property type="entry name" value="Acetyl-CoA carboxylase biotin carboxyl carrier protein"/>
    <property type="match status" value="1"/>
</dbReference>
<dbReference type="Gene3D" id="2.40.50.100">
    <property type="match status" value="1"/>
</dbReference>
<dbReference type="InterPro" id="IPR001882">
    <property type="entry name" value="Biotin_BS"/>
</dbReference>
<dbReference type="InterPro" id="IPR050709">
    <property type="entry name" value="Biotin_Carboxyl_Carrier/Decarb"/>
</dbReference>
<dbReference type="InterPro" id="IPR000089">
    <property type="entry name" value="Biotin_lipoyl"/>
</dbReference>
<dbReference type="InterPro" id="IPR011053">
    <property type="entry name" value="Single_hybrid_motif"/>
</dbReference>
<dbReference type="PANTHER" id="PTHR45266">
    <property type="entry name" value="OXALOACETATE DECARBOXYLASE ALPHA CHAIN"/>
    <property type="match status" value="1"/>
</dbReference>
<dbReference type="PANTHER" id="PTHR45266:SF3">
    <property type="entry name" value="OXALOACETATE DECARBOXYLASE ALPHA CHAIN"/>
    <property type="match status" value="1"/>
</dbReference>
<dbReference type="Pfam" id="PF00364">
    <property type="entry name" value="Biotin_lipoyl"/>
    <property type="match status" value="1"/>
</dbReference>
<dbReference type="SUPFAM" id="SSF51230">
    <property type="entry name" value="Single hybrid motif"/>
    <property type="match status" value="1"/>
</dbReference>
<dbReference type="PROSITE" id="PS00188">
    <property type="entry name" value="BIOTIN"/>
    <property type="match status" value="1"/>
</dbReference>
<dbReference type="PROSITE" id="PS50968">
    <property type="entry name" value="BIOTINYL_LIPOYL"/>
    <property type="match status" value="1"/>
</dbReference>
<evidence type="ECO:0000255" key="1">
    <source>
        <dbReference type="PROSITE-ProRule" id="PRU01066"/>
    </source>
</evidence>
<evidence type="ECO:0000269" key="2">
    <source>
    </source>
</evidence>
<evidence type="ECO:0000269" key="3">
    <source>
    </source>
</evidence>
<evidence type="ECO:0007829" key="4">
    <source>
        <dbReference type="PDB" id="1DCZ"/>
    </source>
</evidence>
<keyword id="KW-0002">3D-structure</keyword>
<keyword id="KW-0092">Biotin</keyword>
<keyword id="KW-0903">Direct protein sequencing</keyword>
<keyword id="KW-0808">Transferase</keyword>
<protein>
    <recommendedName>
        <fullName>Methylmalonyl-CoA carboxyltransferase 1.3S subunit</fullName>
        <ecNumber>2.1.3.1</ecNumber>
    </recommendedName>
    <alternativeName>
        <fullName>Biotin carboxyl carrier protein of transcarboxylase</fullName>
    </alternativeName>
    <alternativeName>
        <fullName>Transcarboxylase, 1.3S subunit</fullName>
    </alternativeName>
</protein>
<name>BCCP_PROFR</name>